<proteinExistence type="inferred from homology"/>
<keyword id="KW-0227">DNA damage</keyword>
<keyword id="KW-0233">DNA recombination</keyword>
<keyword id="KW-0234">DNA repair</keyword>
<keyword id="KW-0479">Metal-binding</keyword>
<keyword id="KW-0862">Zinc</keyword>
<keyword id="KW-0863">Zinc-finger</keyword>
<feature type="chain" id="PRO_0000322971" description="Recombination protein RecR">
    <location>
        <begin position="1"/>
        <end position="197"/>
    </location>
</feature>
<feature type="domain" description="Toprim" evidence="1">
    <location>
        <begin position="78"/>
        <end position="173"/>
    </location>
</feature>
<feature type="zinc finger region" description="C4-type" evidence="1">
    <location>
        <begin position="55"/>
        <end position="70"/>
    </location>
</feature>
<sequence length="197" mass="21454">MSSLLEQLIEAFRVLPGVGQKSAQRMAYHVLEREREGGRRLAAALANAVEKVGHCVQCRDFTESEVCAICANSGRDRQQLCVVESPADRLAIEHATGYRGVYFILQGRLSPLDGIGPRELGLDRLAERLAAGEVTEMIIATNATVEGEATAHYLAQLARQHSVRPSRLAQGMPLGGELEYVDRGTLSHAFGTRSEVL</sequence>
<gene>
    <name evidence="1" type="primary">recR</name>
    <name type="ordered locus">XC_3242</name>
</gene>
<dbReference type="EMBL" id="CP000050">
    <property type="protein sequence ID" value="AAY50286.1"/>
    <property type="molecule type" value="Genomic_DNA"/>
</dbReference>
<dbReference type="RefSeq" id="WP_011036206.1">
    <property type="nucleotide sequence ID" value="NZ_CP155948.1"/>
</dbReference>
<dbReference type="SMR" id="Q4URN7"/>
<dbReference type="KEGG" id="xcb:XC_3242"/>
<dbReference type="HOGENOM" id="CLU_060739_1_2_6"/>
<dbReference type="Proteomes" id="UP000000420">
    <property type="component" value="Chromosome"/>
</dbReference>
<dbReference type="GO" id="GO:0003677">
    <property type="term" value="F:DNA binding"/>
    <property type="evidence" value="ECO:0007669"/>
    <property type="project" value="UniProtKB-UniRule"/>
</dbReference>
<dbReference type="GO" id="GO:0008270">
    <property type="term" value="F:zinc ion binding"/>
    <property type="evidence" value="ECO:0007669"/>
    <property type="project" value="UniProtKB-KW"/>
</dbReference>
<dbReference type="GO" id="GO:0006310">
    <property type="term" value="P:DNA recombination"/>
    <property type="evidence" value="ECO:0007669"/>
    <property type="project" value="UniProtKB-UniRule"/>
</dbReference>
<dbReference type="GO" id="GO:0006281">
    <property type="term" value="P:DNA repair"/>
    <property type="evidence" value="ECO:0007669"/>
    <property type="project" value="UniProtKB-UniRule"/>
</dbReference>
<dbReference type="CDD" id="cd01025">
    <property type="entry name" value="TOPRIM_recR"/>
    <property type="match status" value="1"/>
</dbReference>
<dbReference type="Gene3D" id="3.40.1360.10">
    <property type="match status" value="1"/>
</dbReference>
<dbReference type="Gene3D" id="6.10.250.240">
    <property type="match status" value="1"/>
</dbReference>
<dbReference type="Gene3D" id="1.10.8.420">
    <property type="entry name" value="RecR Domain 1"/>
    <property type="match status" value="1"/>
</dbReference>
<dbReference type="HAMAP" id="MF_00017">
    <property type="entry name" value="RecR"/>
    <property type="match status" value="1"/>
</dbReference>
<dbReference type="InterPro" id="IPR000093">
    <property type="entry name" value="DNA_Rcmb_RecR"/>
</dbReference>
<dbReference type="InterPro" id="IPR023627">
    <property type="entry name" value="Rcmb_RecR"/>
</dbReference>
<dbReference type="InterPro" id="IPR015967">
    <property type="entry name" value="Rcmb_RecR_Znf"/>
</dbReference>
<dbReference type="InterPro" id="IPR006171">
    <property type="entry name" value="TOPRIM_dom"/>
</dbReference>
<dbReference type="InterPro" id="IPR034137">
    <property type="entry name" value="TOPRIM_RecR"/>
</dbReference>
<dbReference type="NCBIfam" id="TIGR00615">
    <property type="entry name" value="recR"/>
    <property type="match status" value="1"/>
</dbReference>
<dbReference type="PANTHER" id="PTHR30446">
    <property type="entry name" value="RECOMBINATION PROTEIN RECR"/>
    <property type="match status" value="1"/>
</dbReference>
<dbReference type="PANTHER" id="PTHR30446:SF0">
    <property type="entry name" value="RECOMBINATION PROTEIN RECR"/>
    <property type="match status" value="1"/>
</dbReference>
<dbReference type="Pfam" id="PF21175">
    <property type="entry name" value="RecR_C"/>
    <property type="match status" value="1"/>
</dbReference>
<dbReference type="Pfam" id="PF21176">
    <property type="entry name" value="RecR_HhH"/>
    <property type="match status" value="1"/>
</dbReference>
<dbReference type="Pfam" id="PF02132">
    <property type="entry name" value="RecR_ZnF"/>
    <property type="match status" value="1"/>
</dbReference>
<dbReference type="Pfam" id="PF13662">
    <property type="entry name" value="Toprim_4"/>
    <property type="match status" value="1"/>
</dbReference>
<dbReference type="SMART" id="SM00493">
    <property type="entry name" value="TOPRIM"/>
    <property type="match status" value="1"/>
</dbReference>
<dbReference type="SUPFAM" id="SSF111304">
    <property type="entry name" value="Recombination protein RecR"/>
    <property type="match status" value="1"/>
</dbReference>
<dbReference type="PROSITE" id="PS01300">
    <property type="entry name" value="RECR"/>
    <property type="match status" value="1"/>
</dbReference>
<dbReference type="PROSITE" id="PS50880">
    <property type="entry name" value="TOPRIM"/>
    <property type="match status" value="1"/>
</dbReference>
<reference key="1">
    <citation type="journal article" date="2005" name="Genome Res.">
        <title>Comparative and functional genomic analyses of the pathogenicity of phytopathogen Xanthomonas campestris pv. campestris.</title>
        <authorList>
            <person name="Qian W."/>
            <person name="Jia Y."/>
            <person name="Ren S.-X."/>
            <person name="He Y.-Q."/>
            <person name="Feng J.-X."/>
            <person name="Lu L.-F."/>
            <person name="Sun Q."/>
            <person name="Ying G."/>
            <person name="Tang D.-J."/>
            <person name="Tang H."/>
            <person name="Wu W."/>
            <person name="Hao P."/>
            <person name="Wang L."/>
            <person name="Jiang B.-L."/>
            <person name="Zeng S."/>
            <person name="Gu W.-Y."/>
            <person name="Lu G."/>
            <person name="Rong L."/>
            <person name="Tian Y."/>
            <person name="Yao Z."/>
            <person name="Fu G."/>
            <person name="Chen B."/>
            <person name="Fang R."/>
            <person name="Qiang B."/>
            <person name="Chen Z."/>
            <person name="Zhao G.-P."/>
            <person name="Tang J.-L."/>
            <person name="He C."/>
        </authorList>
    </citation>
    <scope>NUCLEOTIDE SEQUENCE [LARGE SCALE GENOMIC DNA]</scope>
    <source>
        <strain>8004</strain>
    </source>
</reference>
<evidence type="ECO:0000255" key="1">
    <source>
        <dbReference type="HAMAP-Rule" id="MF_00017"/>
    </source>
</evidence>
<protein>
    <recommendedName>
        <fullName evidence="1">Recombination protein RecR</fullName>
    </recommendedName>
</protein>
<name>RECR_XANC8</name>
<organism>
    <name type="scientific">Xanthomonas campestris pv. campestris (strain 8004)</name>
    <dbReference type="NCBI Taxonomy" id="314565"/>
    <lineage>
        <taxon>Bacteria</taxon>
        <taxon>Pseudomonadati</taxon>
        <taxon>Pseudomonadota</taxon>
        <taxon>Gammaproteobacteria</taxon>
        <taxon>Lysobacterales</taxon>
        <taxon>Lysobacteraceae</taxon>
        <taxon>Xanthomonas</taxon>
    </lineage>
</organism>
<accession>Q4URN7</accession>
<comment type="function">
    <text evidence="1">May play a role in DNA repair. It seems to be involved in an RecBC-independent recombinational process of DNA repair. It may act with RecF and RecO.</text>
</comment>
<comment type="similarity">
    <text evidence="1">Belongs to the RecR family.</text>
</comment>